<gene>
    <name evidence="1" type="primary">nuoK</name>
    <name type="ordered locus">XOO3225</name>
</gene>
<reference key="1">
    <citation type="journal article" date="2005" name="Nucleic Acids Res.">
        <title>The genome sequence of Xanthomonas oryzae pathovar oryzae KACC10331, the bacterial blight pathogen of rice.</title>
        <authorList>
            <person name="Lee B.-M."/>
            <person name="Park Y.-J."/>
            <person name="Park D.-S."/>
            <person name="Kang H.-W."/>
            <person name="Kim J.-G."/>
            <person name="Song E.-S."/>
            <person name="Park I.-C."/>
            <person name="Yoon U.-H."/>
            <person name="Hahn J.-H."/>
            <person name="Koo B.-S."/>
            <person name="Lee G.-B."/>
            <person name="Kim H."/>
            <person name="Park H.-S."/>
            <person name="Yoon K.-O."/>
            <person name="Kim J.-H."/>
            <person name="Jung C.-H."/>
            <person name="Koh N.-H."/>
            <person name="Seo J.-S."/>
            <person name="Go S.-J."/>
        </authorList>
    </citation>
    <scope>NUCLEOTIDE SEQUENCE [LARGE SCALE GENOMIC DNA]</scope>
    <source>
        <strain>KACC10331 / KXO85</strain>
    </source>
</reference>
<keyword id="KW-0997">Cell inner membrane</keyword>
<keyword id="KW-1003">Cell membrane</keyword>
<keyword id="KW-0472">Membrane</keyword>
<keyword id="KW-0520">NAD</keyword>
<keyword id="KW-0874">Quinone</keyword>
<keyword id="KW-1185">Reference proteome</keyword>
<keyword id="KW-1278">Translocase</keyword>
<keyword id="KW-0812">Transmembrane</keyword>
<keyword id="KW-1133">Transmembrane helix</keyword>
<keyword id="KW-0813">Transport</keyword>
<keyword id="KW-0830">Ubiquinone</keyword>
<organism>
    <name type="scientific">Xanthomonas oryzae pv. oryzae (strain KACC10331 / KXO85)</name>
    <dbReference type="NCBI Taxonomy" id="291331"/>
    <lineage>
        <taxon>Bacteria</taxon>
        <taxon>Pseudomonadati</taxon>
        <taxon>Pseudomonadota</taxon>
        <taxon>Gammaproteobacteria</taxon>
        <taxon>Lysobacterales</taxon>
        <taxon>Lysobacteraceae</taxon>
        <taxon>Xanthomonas</taxon>
    </lineage>
</organism>
<comment type="function">
    <text evidence="1">NDH-1 shuttles electrons from NADH, via FMN and iron-sulfur (Fe-S) centers, to quinones in the respiratory chain. The immediate electron acceptor for the enzyme in this species is believed to be ubiquinone. Couples the redox reaction to proton translocation (for every two electrons transferred, four hydrogen ions are translocated across the cytoplasmic membrane), and thus conserves the redox energy in a proton gradient.</text>
</comment>
<comment type="catalytic activity">
    <reaction evidence="1">
        <text>a quinone + NADH + 5 H(+)(in) = a quinol + NAD(+) + 4 H(+)(out)</text>
        <dbReference type="Rhea" id="RHEA:57888"/>
        <dbReference type="ChEBI" id="CHEBI:15378"/>
        <dbReference type="ChEBI" id="CHEBI:24646"/>
        <dbReference type="ChEBI" id="CHEBI:57540"/>
        <dbReference type="ChEBI" id="CHEBI:57945"/>
        <dbReference type="ChEBI" id="CHEBI:132124"/>
    </reaction>
</comment>
<comment type="subunit">
    <text evidence="1">NDH-1 is composed of 14 different subunits. Subunits NuoA, H, J, K, L, M, N constitute the membrane sector of the complex.</text>
</comment>
<comment type="subcellular location">
    <subcellularLocation>
        <location evidence="1">Cell inner membrane</location>
        <topology evidence="1">Multi-pass membrane protein</topology>
    </subcellularLocation>
</comment>
<comment type="similarity">
    <text evidence="1">Belongs to the complex I subunit 4L family.</text>
</comment>
<dbReference type="EC" id="7.1.1.-" evidence="1"/>
<dbReference type="EMBL" id="AE013598">
    <property type="protein sequence ID" value="AAW76479.1"/>
    <property type="molecule type" value="Genomic_DNA"/>
</dbReference>
<dbReference type="SMR" id="Q5GXU2"/>
<dbReference type="STRING" id="291331.XOO3225"/>
<dbReference type="KEGG" id="xoo:XOO3225"/>
<dbReference type="HOGENOM" id="CLU_144724_2_0_6"/>
<dbReference type="Proteomes" id="UP000006735">
    <property type="component" value="Chromosome"/>
</dbReference>
<dbReference type="GO" id="GO:0030964">
    <property type="term" value="C:NADH dehydrogenase complex"/>
    <property type="evidence" value="ECO:0007669"/>
    <property type="project" value="TreeGrafter"/>
</dbReference>
<dbReference type="GO" id="GO:0005886">
    <property type="term" value="C:plasma membrane"/>
    <property type="evidence" value="ECO:0007669"/>
    <property type="project" value="UniProtKB-SubCell"/>
</dbReference>
<dbReference type="GO" id="GO:0050136">
    <property type="term" value="F:NADH:ubiquinone reductase (non-electrogenic) activity"/>
    <property type="evidence" value="ECO:0007669"/>
    <property type="project" value="UniProtKB-UniRule"/>
</dbReference>
<dbReference type="GO" id="GO:0048038">
    <property type="term" value="F:quinone binding"/>
    <property type="evidence" value="ECO:0007669"/>
    <property type="project" value="UniProtKB-KW"/>
</dbReference>
<dbReference type="GO" id="GO:0042773">
    <property type="term" value="P:ATP synthesis coupled electron transport"/>
    <property type="evidence" value="ECO:0007669"/>
    <property type="project" value="InterPro"/>
</dbReference>
<dbReference type="FunFam" id="1.10.287.3510:FF:000001">
    <property type="entry name" value="NADH-quinone oxidoreductase subunit K"/>
    <property type="match status" value="1"/>
</dbReference>
<dbReference type="Gene3D" id="1.10.287.3510">
    <property type="match status" value="1"/>
</dbReference>
<dbReference type="HAMAP" id="MF_01456">
    <property type="entry name" value="NDH1_NuoK"/>
    <property type="match status" value="1"/>
</dbReference>
<dbReference type="InterPro" id="IPR001133">
    <property type="entry name" value="NADH_UbQ_OxRdtase_chain4L/K"/>
</dbReference>
<dbReference type="InterPro" id="IPR039428">
    <property type="entry name" value="NUOK/Mnh_C1-like"/>
</dbReference>
<dbReference type="NCBIfam" id="NF004320">
    <property type="entry name" value="PRK05715.1-2"/>
    <property type="match status" value="1"/>
</dbReference>
<dbReference type="NCBIfam" id="NF004321">
    <property type="entry name" value="PRK05715.1-3"/>
    <property type="match status" value="1"/>
</dbReference>
<dbReference type="NCBIfam" id="NF004323">
    <property type="entry name" value="PRK05715.1-5"/>
    <property type="match status" value="1"/>
</dbReference>
<dbReference type="PANTHER" id="PTHR11434:SF21">
    <property type="entry name" value="NADH DEHYDROGENASE SUBUNIT 4L-RELATED"/>
    <property type="match status" value="1"/>
</dbReference>
<dbReference type="PANTHER" id="PTHR11434">
    <property type="entry name" value="NADH-UBIQUINONE OXIDOREDUCTASE SUBUNIT ND4L"/>
    <property type="match status" value="1"/>
</dbReference>
<dbReference type="Pfam" id="PF00420">
    <property type="entry name" value="Oxidored_q2"/>
    <property type="match status" value="1"/>
</dbReference>
<name>NUOK_XANOR</name>
<proteinExistence type="inferred from homology"/>
<feature type="chain" id="PRO_0000390277" description="NADH-quinone oxidoreductase subunit K">
    <location>
        <begin position="1"/>
        <end position="101"/>
    </location>
</feature>
<feature type="transmembrane region" description="Helical" evidence="1">
    <location>
        <begin position="4"/>
        <end position="24"/>
    </location>
</feature>
<feature type="transmembrane region" description="Helical" evidence="1">
    <location>
        <begin position="30"/>
        <end position="50"/>
    </location>
</feature>
<feature type="transmembrane region" description="Helical" evidence="1">
    <location>
        <begin position="62"/>
        <end position="82"/>
    </location>
</feature>
<evidence type="ECO:0000255" key="1">
    <source>
        <dbReference type="HAMAP-Rule" id="MF_01456"/>
    </source>
</evidence>
<protein>
    <recommendedName>
        <fullName evidence="1">NADH-quinone oxidoreductase subunit K</fullName>
        <ecNumber evidence="1">7.1.1.-</ecNumber>
    </recommendedName>
    <alternativeName>
        <fullName evidence="1">NADH dehydrogenase I subunit K</fullName>
    </alternativeName>
    <alternativeName>
        <fullName evidence="1">NDH-1 subunit K</fullName>
    </alternativeName>
</protein>
<sequence length="101" mass="10879">MITLGHLLGLGAVLFCISLAGIFLNRKNVIVLLMSIELMLLSVNVNFIAFSRELGDTAGQLFVFFILTVAAAEAAIGLAILVTLFRTRRTINVAEVDTLKG</sequence>
<accession>Q5GXU2</accession>